<keyword id="KW-0002">3D-structure</keyword>
<keyword id="KW-1003">Cell membrane</keyword>
<keyword id="KW-0217">Developmental protein</keyword>
<keyword id="KW-0225">Disease variant</keyword>
<keyword id="KW-0472">Membrane</keyword>
<keyword id="KW-1267">Proteomics identification</keyword>
<keyword id="KW-1185">Reference proteome</keyword>
<keyword id="KW-0812">Transmembrane</keyword>
<keyword id="KW-1133">Transmembrane helix</keyword>
<evidence type="ECO:0000250" key="1"/>
<evidence type="ECO:0000250" key="2">
    <source>
        <dbReference type="UniProtKB" id="Q90X64"/>
    </source>
</evidence>
<evidence type="ECO:0000250" key="3">
    <source>
        <dbReference type="UniProtKB" id="Q91ZD4"/>
    </source>
</evidence>
<evidence type="ECO:0000255" key="4"/>
<evidence type="ECO:0000256" key="5">
    <source>
        <dbReference type="SAM" id="MobiDB-lite"/>
    </source>
</evidence>
<evidence type="ECO:0000269" key="6">
    <source>
    </source>
</evidence>
<evidence type="ECO:0000305" key="7"/>
<evidence type="ECO:0007829" key="8">
    <source>
        <dbReference type="PDB" id="6XA6"/>
    </source>
</evidence>
<evidence type="ECO:0007829" key="9">
    <source>
        <dbReference type="PDB" id="7R2M"/>
    </source>
</evidence>
<evidence type="ECO:0007829" key="10">
    <source>
        <dbReference type="PDB" id="9JKA"/>
    </source>
</evidence>
<gene>
    <name type="primary">VANGL2</name>
    <name type="synonym">KIAA1215</name>
    <name type="synonym">STB1</name>
</gene>
<comment type="function">
    <text evidence="3">Involved in the control of early morphogenesis and patterning of both axial midline structures and the development of neural plate. Plays a role in the regulation of planar cell polarity, particularly in the orientation of stereociliary bundles in the cochlea. Required for polarization and movement of myocardializing cells in the outflow tract and seems to act via RHOA signaling to regulate this process. Required for cell surface localization of FZD3 and FZD6 in the inner ear (By similarity).</text>
</comment>
<comment type="subunit">
    <text evidence="1 2">Homodimer and heterodimer with VANGL1. Interacts through its C-terminal region with the N-terminal half of DVL1, DVL2 and DVL3. The PDZ domain of DVL1, DVL2 and DVL3 is required for the interaction. Also interacts with the PDZ domains of MAGI3, SCRIB/SCRB1 and FZD3 (By similarity). Interacts with PRICKLE3 (By similarity).</text>
</comment>
<comment type="interaction">
    <interactant intactId="EBI-1054279">
        <id>Q9ULK5</id>
    </interactant>
    <interactant intactId="EBI-357481">
        <id>Q12959</id>
        <label>DLG1</label>
    </interactant>
    <organismsDiffer>false</organismsDiffer>
    <experiments>2</experiments>
</comment>
<comment type="interaction">
    <interactant intactId="EBI-1054279">
        <id>Q9ULK5</id>
    </interactant>
    <interactant intactId="EBI-351896">
        <id>P11142</id>
        <label>HSPA8</label>
    </interactant>
    <organismsDiffer>false</organismsDiffer>
    <experiments>2</experiments>
</comment>
<comment type="interaction">
    <interactant intactId="EBI-1054279">
        <id>Q9ULK5</id>
    </interactant>
    <interactant intactId="EBI-1047946">
        <id>P26045</id>
        <label>PTPN3</label>
    </interactant>
    <organismsDiffer>false</organismsDiffer>
    <experiments>2</experiments>
</comment>
<comment type="subcellular location">
    <subcellularLocation>
        <location evidence="1">Cell membrane</location>
        <topology evidence="1">Multi-pass membrane protein</topology>
    </subcellularLocation>
</comment>
<comment type="disease" evidence="6">
    <disease id="DI-02042">
        <name>Neural tube defects</name>
        <acronym>NTD</acronym>
        <description>Congenital malformations of the central nervous system and adjacent structures related to defective neural tube closure during the first trimester of pregnancy. Failure of neural tube closure can occur at any level of the embryonic axis. Common NTD forms include anencephaly, myelomeningocele and spina bifida, which result from the failure of fusion in the cranial and spinal region of the neural tube. NTDs have a multifactorial etiology encompassing both genetic and environmental components.</description>
        <dbReference type="MIM" id="182940"/>
    </disease>
    <text>The disease is caused by variants affecting the gene represented in this entry.</text>
</comment>
<comment type="similarity">
    <text evidence="7">Belongs to the Vang family.</text>
</comment>
<comment type="sequence caution" evidence="7">
    <conflict type="erroneous initiation">
        <sequence resource="EMBL-CDS" id="BAA86529"/>
    </conflict>
    <text>Extended N-terminus.</text>
</comment>
<feature type="chain" id="PRO_0000186195" description="Vang-like protein 2">
    <location>
        <begin position="1"/>
        <end position="521"/>
    </location>
</feature>
<feature type="topological domain" description="Cytoplasmic" evidence="4">
    <location>
        <begin position="1"/>
        <end position="108"/>
    </location>
</feature>
<feature type="transmembrane region" description="Helical; Name=1" evidence="4">
    <location>
        <begin position="109"/>
        <end position="129"/>
    </location>
</feature>
<feature type="topological domain" description="Extracellular" evidence="4">
    <location>
        <begin position="130"/>
        <end position="147"/>
    </location>
</feature>
<feature type="transmembrane region" description="Helical; Name=2" evidence="4">
    <location>
        <begin position="148"/>
        <end position="168"/>
    </location>
</feature>
<feature type="topological domain" description="Cytoplasmic" evidence="4">
    <location>
        <begin position="169"/>
        <end position="178"/>
    </location>
</feature>
<feature type="transmembrane region" description="Helical; Name=3" evidence="4">
    <location>
        <begin position="179"/>
        <end position="199"/>
    </location>
</feature>
<feature type="topological domain" description="Extracellular" evidence="4">
    <location>
        <begin position="200"/>
        <end position="217"/>
    </location>
</feature>
<feature type="transmembrane region" description="Helical; Name=4" evidence="4">
    <location>
        <begin position="218"/>
        <end position="238"/>
    </location>
</feature>
<feature type="topological domain" description="Cytoplasmic" evidence="4">
    <location>
        <begin position="239"/>
        <end position="521"/>
    </location>
</feature>
<feature type="region of interest" description="Disordered" evidence="5">
    <location>
        <begin position="1"/>
        <end position="81"/>
    </location>
</feature>
<feature type="compositionally biased region" description="Basic residues" evidence="5">
    <location>
        <begin position="15"/>
        <end position="33"/>
    </location>
</feature>
<feature type="compositionally biased region" description="Basic and acidic residues" evidence="5">
    <location>
        <begin position="57"/>
        <end position="67"/>
    </location>
</feature>
<feature type="compositionally biased region" description="Low complexity" evidence="5">
    <location>
        <begin position="69"/>
        <end position="81"/>
    </location>
</feature>
<feature type="sequence variant" id="VAR_067221" description="In NTD; dbSNP:rs1571244916." evidence="6">
    <original>S</original>
    <variation>F</variation>
    <location>
        <position position="84"/>
    </location>
</feature>
<feature type="sequence variant" id="VAR_067222" description="In NTD; the mutant protein has diminished interaction with DVL1 compared to wild-type; dbSNP:rs267607167." evidence="6">
    <original>R</original>
    <variation>C</variation>
    <location>
        <position position="353"/>
    </location>
</feature>
<feature type="sequence variant" id="VAR_067223" description="In NTD; the mutation protein completely abrogates interaction with DVL1 compared to wild-type; dbSNP:rs267607168." evidence="6">
    <original>F</original>
    <variation>S</variation>
    <location>
        <position position="437"/>
    </location>
</feature>
<feature type="helix" evidence="10">
    <location>
        <begin position="110"/>
        <end position="133"/>
    </location>
</feature>
<feature type="strand" evidence="10">
    <location>
        <begin position="134"/>
        <end position="138"/>
    </location>
</feature>
<feature type="helix" evidence="10">
    <location>
        <begin position="143"/>
        <end position="167"/>
    </location>
</feature>
<feature type="strand" evidence="10">
    <location>
        <begin position="172"/>
        <end position="174"/>
    </location>
</feature>
<feature type="helix" evidence="10">
    <location>
        <begin position="180"/>
        <end position="203"/>
    </location>
</feature>
<feature type="turn" evidence="10">
    <location>
        <begin position="204"/>
        <end position="208"/>
    </location>
</feature>
<feature type="helix" evidence="10">
    <location>
        <begin position="212"/>
        <end position="237"/>
    </location>
</feature>
<feature type="turn" evidence="10">
    <location>
        <begin position="238"/>
        <end position="241"/>
    </location>
</feature>
<feature type="strand" evidence="10">
    <location>
        <begin position="246"/>
        <end position="252"/>
    </location>
</feature>
<feature type="turn" evidence="10">
    <location>
        <begin position="253"/>
        <end position="255"/>
    </location>
</feature>
<feature type="strand" evidence="10">
    <location>
        <begin position="258"/>
        <end position="263"/>
    </location>
</feature>
<feature type="helix" evidence="10">
    <location>
        <begin position="268"/>
        <end position="282"/>
    </location>
</feature>
<feature type="helix" evidence="10">
    <location>
        <begin position="327"/>
        <end position="335"/>
    </location>
</feature>
<feature type="helix" evidence="10">
    <location>
        <begin position="340"/>
        <end position="367"/>
    </location>
</feature>
<feature type="helix" evidence="10">
    <location>
        <begin position="387"/>
        <end position="395"/>
    </location>
</feature>
<feature type="turn" evidence="10">
    <location>
        <begin position="396"/>
        <end position="398"/>
    </location>
</feature>
<feature type="helix" evidence="10">
    <location>
        <begin position="399"/>
        <end position="408"/>
    </location>
</feature>
<feature type="turn" evidence="10">
    <location>
        <begin position="412"/>
        <end position="414"/>
    </location>
</feature>
<feature type="helix" evidence="10">
    <location>
        <begin position="417"/>
        <end position="429"/>
    </location>
</feature>
<feature type="helix" evidence="10">
    <location>
        <begin position="434"/>
        <end position="442"/>
    </location>
</feature>
<feature type="helix" evidence="10">
    <location>
        <begin position="447"/>
        <end position="449"/>
    </location>
</feature>
<feature type="turn" evidence="10">
    <location>
        <begin position="452"/>
        <end position="455"/>
    </location>
</feature>
<feature type="helix" evidence="10">
    <location>
        <begin position="457"/>
        <end position="459"/>
    </location>
</feature>
<feature type="strand" evidence="10">
    <location>
        <begin position="460"/>
        <end position="463"/>
    </location>
</feature>
<feature type="strand" evidence="10">
    <location>
        <begin position="477"/>
        <end position="481"/>
    </location>
</feature>
<feature type="strand" evidence="10">
    <location>
        <begin position="486"/>
        <end position="493"/>
    </location>
</feature>
<feature type="strand" evidence="10">
    <location>
        <begin position="497"/>
        <end position="502"/>
    </location>
</feature>
<feature type="helix" evidence="10">
    <location>
        <begin position="506"/>
        <end position="508"/>
    </location>
</feature>
<feature type="strand" evidence="9">
    <location>
        <begin position="510"/>
        <end position="512"/>
    </location>
</feature>
<feature type="strand" evidence="8">
    <location>
        <begin position="518"/>
        <end position="521"/>
    </location>
</feature>
<proteinExistence type="evidence at protein level"/>
<accession>Q9ULK5</accession>
<accession>D3DVE9</accession>
<accession>Q5T212</accession>
<dbReference type="EMBL" id="AB033041">
    <property type="protein sequence ID" value="BAA86529.1"/>
    <property type="status" value="ALT_INIT"/>
    <property type="molecule type" value="mRNA"/>
</dbReference>
<dbReference type="EMBL" id="AL445230">
    <property type="status" value="NOT_ANNOTATED_CDS"/>
    <property type="molecule type" value="Genomic_DNA"/>
</dbReference>
<dbReference type="EMBL" id="CH471121">
    <property type="protein sequence ID" value="EAW52718.1"/>
    <property type="molecule type" value="Genomic_DNA"/>
</dbReference>
<dbReference type="EMBL" id="BC103920">
    <property type="status" value="NOT_ANNOTATED_CDS"/>
    <property type="molecule type" value="mRNA"/>
</dbReference>
<dbReference type="CCDS" id="CCDS30915.1"/>
<dbReference type="RefSeq" id="NP_065068.1">
    <property type="nucleotide sequence ID" value="NM_020335.3"/>
</dbReference>
<dbReference type="RefSeq" id="XP_005245414.1">
    <property type="nucleotide sequence ID" value="XM_005245357.2"/>
</dbReference>
<dbReference type="RefSeq" id="XP_011508106.1">
    <property type="nucleotide sequence ID" value="XM_011509804.2"/>
</dbReference>
<dbReference type="RefSeq" id="XP_047281976.1">
    <property type="nucleotide sequence ID" value="XM_047426020.1"/>
</dbReference>
<dbReference type="RefSeq" id="XP_054193780.1">
    <property type="nucleotide sequence ID" value="XM_054337805.1"/>
</dbReference>
<dbReference type="RefSeq" id="XP_054193781.1">
    <property type="nucleotide sequence ID" value="XM_054337806.1"/>
</dbReference>
<dbReference type="PDB" id="6XA6">
    <property type="method" value="X-ray"/>
    <property type="resolution" value="1.95 A"/>
    <property type="chains" value="C/D=514-521"/>
</dbReference>
<dbReference type="PDB" id="6XA7">
    <property type="method" value="X-ray"/>
    <property type="resolution" value="2.50 A"/>
    <property type="chains" value="E/F/G/H=514-521"/>
</dbReference>
<dbReference type="PDB" id="6XA8">
    <property type="method" value="X-ray"/>
    <property type="resolution" value="2.20 A"/>
    <property type="chains" value="C/D=515-521"/>
</dbReference>
<dbReference type="PDB" id="7R2M">
    <property type="method" value="X-ray"/>
    <property type="resolution" value="2.40 A"/>
    <property type="chains" value="B/E=507-521"/>
</dbReference>
<dbReference type="PDB" id="7R2T">
    <property type="method" value="X-ray"/>
    <property type="resolution" value="2.50 A"/>
    <property type="chains" value="B=513-521"/>
</dbReference>
<dbReference type="PDB" id="9JK7">
    <property type="method" value="EM"/>
    <property type="resolution" value="2.90 A"/>
    <property type="chains" value="A/B/C/D/E/F=1-521"/>
</dbReference>
<dbReference type="PDB" id="9JKA">
    <property type="method" value="EM"/>
    <property type="resolution" value="2.50 A"/>
    <property type="chains" value="A/B/C/D/E/F=1-521"/>
</dbReference>
<dbReference type="PDBsum" id="6XA6"/>
<dbReference type="PDBsum" id="6XA7"/>
<dbReference type="PDBsum" id="6XA8"/>
<dbReference type="PDBsum" id="7R2M"/>
<dbReference type="PDBsum" id="7R2T"/>
<dbReference type="PDBsum" id="9JK7"/>
<dbReference type="PDBsum" id="9JKA"/>
<dbReference type="EMDB" id="EMD-61546"/>
<dbReference type="EMDB" id="EMD-61549"/>
<dbReference type="SMR" id="Q9ULK5"/>
<dbReference type="BioGRID" id="121454">
    <property type="interactions" value="194"/>
</dbReference>
<dbReference type="CORUM" id="Q9ULK5"/>
<dbReference type="FunCoup" id="Q9ULK5">
    <property type="interactions" value="1233"/>
</dbReference>
<dbReference type="IntAct" id="Q9ULK5">
    <property type="interactions" value="76"/>
</dbReference>
<dbReference type="MINT" id="Q9ULK5"/>
<dbReference type="STRING" id="9606.ENSP00000357040"/>
<dbReference type="iPTMnet" id="Q9ULK5"/>
<dbReference type="PhosphoSitePlus" id="Q9ULK5"/>
<dbReference type="BioMuta" id="VANGL2"/>
<dbReference type="DMDM" id="38258849"/>
<dbReference type="jPOST" id="Q9ULK5"/>
<dbReference type="MassIVE" id="Q9ULK5"/>
<dbReference type="PaxDb" id="9606-ENSP00000357040"/>
<dbReference type="PeptideAtlas" id="Q9ULK5"/>
<dbReference type="ProteomicsDB" id="85062"/>
<dbReference type="Pumba" id="Q9ULK5"/>
<dbReference type="Antibodypedia" id="34278">
    <property type="antibodies" value="229 antibodies from 31 providers"/>
</dbReference>
<dbReference type="DNASU" id="57216"/>
<dbReference type="Ensembl" id="ENST00000368061.3">
    <property type="protein sequence ID" value="ENSP00000357040.2"/>
    <property type="gene ID" value="ENSG00000162738.8"/>
</dbReference>
<dbReference type="GeneID" id="57216"/>
<dbReference type="KEGG" id="hsa:57216"/>
<dbReference type="MANE-Select" id="ENST00000368061.3">
    <property type="protein sequence ID" value="ENSP00000357040.2"/>
    <property type="RefSeq nucleotide sequence ID" value="NM_020335.3"/>
    <property type="RefSeq protein sequence ID" value="NP_065068.1"/>
</dbReference>
<dbReference type="UCSC" id="uc001fwc.3">
    <property type="organism name" value="human"/>
</dbReference>
<dbReference type="AGR" id="HGNC:15511"/>
<dbReference type="CTD" id="57216"/>
<dbReference type="DisGeNET" id="57216"/>
<dbReference type="GeneCards" id="VANGL2"/>
<dbReference type="HGNC" id="HGNC:15511">
    <property type="gene designation" value="VANGL2"/>
</dbReference>
<dbReference type="HPA" id="ENSG00000162738">
    <property type="expression patterns" value="Tissue enhanced (skin)"/>
</dbReference>
<dbReference type="MalaCards" id="VANGL2"/>
<dbReference type="MIM" id="182940">
    <property type="type" value="phenotype"/>
</dbReference>
<dbReference type="MIM" id="600533">
    <property type="type" value="gene"/>
</dbReference>
<dbReference type="neXtProt" id="NX_Q9ULK5"/>
<dbReference type="OpenTargets" id="ENSG00000162738"/>
<dbReference type="Orphanet" id="563609">
    <property type="disease" value="Isolated anencephaly"/>
</dbReference>
<dbReference type="Orphanet" id="563612">
    <property type="disease" value="Isolated exencephaly"/>
</dbReference>
<dbReference type="PharmGKB" id="PA37970"/>
<dbReference type="VEuPathDB" id="HostDB:ENSG00000162738"/>
<dbReference type="eggNOG" id="KOG3814">
    <property type="taxonomic scope" value="Eukaryota"/>
</dbReference>
<dbReference type="GeneTree" id="ENSGT00390000012496"/>
<dbReference type="HOGENOM" id="CLU_015742_1_0_1"/>
<dbReference type="InParanoid" id="Q9ULK5"/>
<dbReference type="OMA" id="MWHREND"/>
<dbReference type="OrthoDB" id="8887313at2759"/>
<dbReference type="PAN-GO" id="Q9ULK5">
    <property type="GO annotations" value="3 GO annotations based on evolutionary models"/>
</dbReference>
<dbReference type="PhylomeDB" id="Q9ULK5"/>
<dbReference type="TreeFam" id="TF313467"/>
<dbReference type="PathwayCommons" id="Q9ULK5"/>
<dbReference type="Reactome" id="R-HSA-4086400">
    <property type="pathway name" value="PCP/CE pathway"/>
</dbReference>
<dbReference type="Reactome" id="R-HSA-4608870">
    <property type="pathway name" value="Asymmetric localization of PCP proteins"/>
</dbReference>
<dbReference type="Reactome" id="R-HSA-9696264">
    <property type="pathway name" value="RND3 GTPase cycle"/>
</dbReference>
<dbReference type="Reactome" id="R-HSA-9696270">
    <property type="pathway name" value="RND2 GTPase cycle"/>
</dbReference>
<dbReference type="Reactome" id="R-HSA-9696273">
    <property type="pathway name" value="RND1 GTPase cycle"/>
</dbReference>
<dbReference type="SignaLink" id="Q9ULK5"/>
<dbReference type="BioGRID-ORCS" id="57216">
    <property type="hits" value="8 hits in 1155 CRISPR screens"/>
</dbReference>
<dbReference type="ChiTaRS" id="VANGL2">
    <property type="organism name" value="human"/>
</dbReference>
<dbReference type="GenomeRNAi" id="57216"/>
<dbReference type="Pharos" id="Q9ULK5">
    <property type="development level" value="Tbio"/>
</dbReference>
<dbReference type="PRO" id="PR:Q9ULK5"/>
<dbReference type="Proteomes" id="UP000005640">
    <property type="component" value="Chromosome 1"/>
</dbReference>
<dbReference type="RNAct" id="Q9ULK5">
    <property type="molecule type" value="protein"/>
</dbReference>
<dbReference type="Bgee" id="ENSG00000162738">
    <property type="expression patterns" value="Expressed in ganglionic eminence and 147 other cell types or tissues"/>
</dbReference>
<dbReference type="GO" id="GO:0090651">
    <property type="term" value="C:apical cytoplasm"/>
    <property type="evidence" value="ECO:0007669"/>
    <property type="project" value="Ensembl"/>
</dbReference>
<dbReference type="GO" id="GO:0016324">
    <property type="term" value="C:apical plasma membrane"/>
    <property type="evidence" value="ECO:0000250"/>
    <property type="project" value="UniProtKB"/>
</dbReference>
<dbReference type="GO" id="GO:0016323">
    <property type="term" value="C:basolateral plasma membrane"/>
    <property type="evidence" value="ECO:0007669"/>
    <property type="project" value="Ensembl"/>
</dbReference>
<dbReference type="GO" id="GO:0060187">
    <property type="term" value="C:cell pole"/>
    <property type="evidence" value="ECO:0007669"/>
    <property type="project" value="Ensembl"/>
</dbReference>
<dbReference type="GO" id="GO:0005911">
    <property type="term" value="C:cell-cell junction"/>
    <property type="evidence" value="ECO:0000250"/>
    <property type="project" value="UniProtKB"/>
</dbReference>
<dbReference type="GO" id="GO:0030134">
    <property type="term" value="C:COPII-coated ER to Golgi transport vesicle"/>
    <property type="evidence" value="ECO:0007669"/>
    <property type="project" value="Ensembl"/>
</dbReference>
<dbReference type="GO" id="GO:0098978">
    <property type="term" value="C:glutamatergic synapse"/>
    <property type="evidence" value="ECO:0007669"/>
    <property type="project" value="Ensembl"/>
</dbReference>
<dbReference type="GO" id="GO:0016328">
    <property type="term" value="C:lateral plasma membrane"/>
    <property type="evidence" value="ECO:0000250"/>
    <property type="project" value="UniProtKB"/>
</dbReference>
<dbReference type="GO" id="GO:0005886">
    <property type="term" value="C:plasma membrane"/>
    <property type="evidence" value="ECO:0000318"/>
    <property type="project" value="GO_Central"/>
</dbReference>
<dbReference type="GO" id="GO:0098839">
    <property type="term" value="C:postsynaptic density membrane"/>
    <property type="evidence" value="ECO:0007669"/>
    <property type="project" value="Ensembl"/>
</dbReference>
<dbReference type="GO" id="GO:0001725">
    <property type="term" value="C:stress fiber"/>
    <property type="evidence" value="ECO:0007669"/>
    <property type="project" value="Ensembl"/>
</dbReference>
<dbReference type="GO" id="GO:0009952">
    <property type="term" value="P:anterior/posterior pattern specification"/>
    <property type="evidence" value="ECO:0007669"/>
    <property type="project" value="Ensembl"/>
</dbReference>
<dbReference type="GO" id="GO:0045176">
    <property type="term" value="P:apical protein localization"/>
    <property type="evidence" value="ECO:0000250"/>
    <property type="project" value="UniProtKB"/>
</dbReference>
<dbReference type="GO" id="GO:0035787">
    <property type="term" value="P:cell migration involved in kidney development"/>
    <property type="evidence" value="ECO:0000250"/>
    <property type="project" value="UniProtKB"/>
</dbReference>
<dbReference type="GO" id="GO:0090103">
    <property type="term" value="P:cochlea morphogenesis"/>
    <property type="evidence" value="ECO:0007669"/>
    <property type="project" value="Ensembl"/>
</dbReference>
<dbReference type="GO" id="GO:0060028">
    <property type="term" value="P:convergent extension involved in axis elongation"/>
    <property type="evidence" value="ECO:0007669"/>
    <property type="project" value="Ensembl"/>
</dbReference>
<dbReference type="GO" id="GO:0022007">
    <property type="term" value="P:convergent extension involved in neural plate elongation"/>
    <property type="evidence" value="ECO:0007669"/>
    <property type="project" value="Ensembl"/>
</dbReference>
<dbReference type="GO" id="GO:0048546">
    <property type="term" value="P:digestive tract morphogenesis"/>
    <property type="evidence" value="ECO:0007669"/>
    <property type="project" value="Ensembl"/>
</dbReference>
<dbReference type="GO" id="GO:0036514">
    <property type="term" value="P:dopaminergic neuron axon guidance"/>
    <property type="evidence" value="ECO:0000250"/>
    <property type="project" value="ParkinsonsUK-UCL"/>
</dbReference>
<dbReference type="GO" id="GO:0048105">
    <property type="term" value="P:establishment of body hair planar orientation"/>
    <property type="evidence" value="ECO:0007669"/>
    <property type="project" value="Ensembl"/>
</dbReference>
<dbReference type="GO" id="GO:0001736">
    <property type="term" value="P:establishment of planar polarity"/>
    <property type="evidence" value="ECO:0000250"/>
    <property type="project" value="UniProtKB"/>
</dbReference>
<dbReference type="GO" id="GO:0090177">
    <property type="term" value="P:establishment of planar polarity involved in neural tube closure"/>
    <property type="evidence" value="ECO:0007669"/>
    <property type="project" value="Ensembl"/>
</dbReference>
<dbReference type="GO" id="GO:0045197">
    <property type="term" value="P:establishment or maintenance of epithelial cell apical/basal polarity"/>
    <property type="evidence" value="ECO:0007669"/>
    <property type="project" value="Ensembl"/>
</dbReference>
<dbReference type="GO" id="GO:0032835">
    <property type="term" value="P:glomerulus development"/>
    <property type="evidence" value="ECO:0007669"/>
    <property type="project" value="Ensembl"/>
</dbReference>
<dbReference type="GO" id="GO:0001942">
    <property type="term" value="P:hair follicle development"/>
    <property type="evidence" value="ECO:0007669"/>
    <property type="project" value="Ensembl"/>
</dbReference>
<dbReference type="GO" id="GO:0001947">
    <property type="term" value="P:heart looping"/>
    <property type="evidence" value="ECO:0000250"/>
    <property type="project" value="UniProtKB"/>
</dbReference>
<dbReference type="GO" id="GO:0015012">
    <property type="term" value="P:heparan sulfate proteoglycan biosynthetic process"/>
    <property type="evidence" value="ECO:0007669"/>
    <property type="project" value="Ensembl"/>
</dbReference>
<dbReference type="GO" id="GO:0060122">
    <property type="term" value="P:inner ear receptor cell stereocilium organization"/>
    <property type="evidence" value="ECO:0007669"/>
    <property type="project" value="Ensembl"/>
</dbReference>
<dbReference type="GO" id="GO:0060993">
    <property type="term" value="P:kidney morphogenesis"/>
    <property type="evidence" value="ECO:0007669"/>
    <property type="project" value="Ensembl"/>
</dbReference>
<dbReference type="GO" id="GO:0060490">
    <property type="term" value="P:lateral sprouting involved in lung morphogenesis"/>
    <property type="evidence" value="ECO:0007669"/>
    <property type="project" value="Ensembl"/>
</dbReference>
<dbReference type="GO" id="GO:0003149">
    <property type="term" value="P:membranous septum morphogenesis"/>
    <property type="evidence" value="ECO:0007669"/>
    <property type="project" value="Ensembl"/>
</dbReference>
<dbReference type="GO" id="GO:0003150">
    <property type="term" value="P:muscular septum morphogenesis"/>
    <property type="evidence" value="ECO:0007669"/>
    <property type="project" value="Ensembl"/>
</dbReference>
<dbReference type="GO" id="GO:0001843">
    <property type="term" value="P:neural tube closure"/>
    <property type="evidence" value="ECO:0000250"/>
    <property type="project" value="UniProtKB"/>
</dbReference>
<dbReference type="GO" id="GO:1905515">
    <property type="term" value="P:non-motile cilium assembly"/>
    <property type="evidence" value="ECO:0000250"/>
    <property type="project" value="UniProtKB"/>
</dbReference>
<dbReference type="GO" id="GO:0060488">
    <property type="term" value="P:orthogonal dichotomous subdivision of terminal units involved in lung branching morphogenesis"/>
    <property type="evidence" value="ECO:0007669"/>
    <property type="project" value="Ensembl"/>
</dbReference>
<dbReference type="GO" id="GO:0060489">
    <property type="term" value="P:planar dichotomous subdivision of terminal units involved in lung branching morphogenesis"/>
    <property type="evidence" value="ECO:0007669"/>
    <property type="project" value="Ensembl"/>
</dbReference>
<dbReference type="GO" id="GO:0036342">
    <property type="term" value="P:post-anal tail morphogenesis"/>
    <property type="evidence" value="ECO:0007669"/>
    <property type="project" value="Ensembl"/>
</dbReference>
<dbReference type="GO" id="GO:0032956">
    <property type="term" value="P:regulation of actin cytoskeleton organization"/>
    <property type="evidence" value="ECO:0007669"/>
    <property type="project" value="Ensembl"/>
</dbReference>
<dbReference type="GO" id="GO:0090175">
    <property type="term" value="P:regulation of establishment of planar polarity"/>
    <property type="evidence" value="ECO:0007669"/>
    <property type="project" value="Ensembl"/>
</dbReference>
<dbReference type="GO" id="GO:1905806">
    <property type="term" value="P:regulation of synapse pruning"/>
    <property type="evidence" value="ECO:0007669"/>
    <property type="project" value="Ensembl"/>
</dbReference>
<dbReference type="GO" id="GO:0030111">
    <property type="term" value="P:regulation of Wnt signaling pathway"/>
    <property type="evidence" value="ECO:0007669"/>
    <property type="project" value="Ensembl"/>
</dbReference>
<dbReference type="GO" id="GO:0007266">
    <property type="term" value="P:Rho protein signal transduction"/>
    <property type="evidence" value="ECO:0007669"/>
    <property type="project" value="Ensembl"/>
</dbReference>
<dbReference type="GO" id="GO:0036515">
    <property type="term" value="P:serotonergic neuron axon guidance"/>
    <property type="evidence" value="ECO:0000250"/>
    <property type="project" value="ParkinsonsUK-UCL"/>
</dbReference>
<dbReference type="GO" id="GO:0048103">
    <property type="term" value="P:somatic stem cell division"/>
    <property type="evidence" value="ECO:0007669"/>
    <property type="project" value="Ensembl"/>
</dbReference>
<dbReference type="GO" id="GO:0035019">
    <property type="term" value="P:somatic stem cell population maintenance"/>
    <property type="evidence" value="ECO:0007669"/>
    <property type="project" value="Ensembl"/>
</dbReference>
<dbReference type="GO" id="GO:0060071">
    <property type="term" value="P:Wnt signaling pathway, planar cell polarity pathway"/>
    <property type="evidence" value="ECO:0000250"/>
    <property type="project" value="ParkinsonsUK-UCL"/>
</dbReference>
<dbReference type="GO" id="GO:0042060">
    <property type="term" value="P:wound healing"/>
    <property type="evidence" value="ECO:0007669"/>
    <property type="project" value="Ensembl"/>
</dbReference>
<dbReference type="InterPro" id="IPR009539">
    <property type="entry name" value="VANGL"/>
</dbReference>
<dbReference type="PANTHER" id="PTHR20886">
    <property type="entry name" value="VANG-LIKE PROTEIN"/>
    <property type="match status" value="1"/>
</dbReference>
<dbReference type="Pfam" id="PF06638">
    <property type="entry name" value="Strabismus"/>
    <property type="match status" value="1"/>
</dbReference>
<dbReference type="PIRSF" id="PIRSF007991">
    <property type="entry name" value="Strabismus"/>
    <property type="match status" value="1"/>
</dbReference>
<reference key="1">
    <citation type="journal article" date="1999" name="DNA Res.">
        <title>Prediction of the coding sequences of unidentified human genes. XV. The complete sequences of 100 new cDNA clones from brain which code for large proteins in vitro.</title>
        <authorList>
            <person name="Nagase T."/>
            <person name="Ishikawa K."/>
            <person name="Kikuno R."/>
            <person name="Hirosawa M."/>
            <person name="Nomura N."/>
            <person name="Ohara O."/>
        </authorList>
    </citation>
    <scope>NUCLEOTIDE SEQUENCE [LARGE SCALE MRNA]</scope>
    <source>
        <tissue>Brain</tissue>
    </source>
</reference>
<reference key="2">
    <citation type="journal article" date="2006" name="Nature">
        <title>The DNA sequence and biological annotation of human chromosome 1.</title>
        <authorList>
            <person name="Gregory S.G."/>
            <person name="Barlow K.F."/>
            <person name="McLay K.E."/>
            <person name="Kaul R."/>
            <person name="Swarbreck D."/>
            <person name="Dunham A."/>
            <person name="Scott C.E."/>
            <person name="Howe K.L."/>
            <person name="Woodfine K."/>
            <person name="Spencer C.C.A."/>
            <person name="Jones M.C."/>
            <person name="Gillson C."/>
            <person name="Searle S."/>
            <person name="Zhou Y."/>
            <person name="Kokocinski F."/>
            <person name="McDonald L."/>
            <person name="Evans R."/>
            <person name="Phillips K."/>
            <person name="Atkinson A."/>
            <person name="Cooper R."/>
            <person name="Jones C."/>
            <person name="Hall R.E."/>
            <person name="Andrews T.D."/>
            <person name="Lloyd C."/>
            <person name="Ainscough R."/>
            <person name="Almeida J.P."/>
            <person name="Ambrose K.D."/>
            <person name="Anderson F."/>
            <person name="Andrew R.W."/>
            <person name="Ashwell R.I.S."/>
            <person name="Aubin K."/>
            <person name="Babbage A.K."/>
            <person name="Bagguley C.L."/>
            <person name="Bailey J."/>
            <person name="Beasley H."/>
            <person name="Bethel G."/>
            <person name="Bird C.P."/>
            <person name="Bray-Allen S."/>
            <person name="Brown J.Y."/>
            <person name="Brown A.J."/>
            <person name="Buckley D."/>
            <person name="Burton J."/>
            <person name="Bye J."/>
            <person name="Carder C."/>
            <person name="Chapman J.C."/>
            <person name="Clark S.Y."/>
            <person name="Clarke G."/>
            <person name="Clee C."/>
            <person name="Cobley V."/>
            <person name="Collier R.E."/>
            <person name="Corby N."/>
            <person name="Coville G.J."/>
            <person name="Davies J."/>
            <person name="Deadman R."/>
            <person name="Dunn M."/>
            <person name="Earthrowl M."/>
            <person name="Ellington A.G."/>
            <person name="Errington H."/>
            <person name="Frankish A."/>
            <person name="Frankland J."/>
            <person name="French L."/>
            <person name="Garner P."/>
            <person name="Garnett J."/>
            <person name="Gay L."/>
            <person name="Ghori M.R.J."/>
            <person name="Gibson R."/>
            <person name="Gilby L.M."/>
            <person name="Gillett W."/>
            <person name="Glithero R.J."/>
            <person name="Grafham D.V."/>
            <person name="Griffiths C."/>
            <person name="Griffiths-Jones S."/>
            <person name="Grocock R."/>
            <person name="Hammond S."/>
            <person name="Harrison E.S.I."/>
            <person name="Hart E."/>
            <person name="Haugen E."/>
            <person name="Heath P.D."/>
            <person name="Holmes S."/>
            <person name="Holt K."/>
            <person name="Howden P.J."/>
            <person name="Hunt A.R."/>
            <person name="Hunt S.E."/>
            <person name="Hunter G."/>
            <person name="Isherwood J."/>
            <person name="James R."/>
            <person name="Johnson C."/>
            <person name="Johnson D."/>
            <person name="Joy A."/>
            <person name="Kay M."/>
            <person name="Kershaw J.K."/>
            <person name="Kibukawa M."/>
            <person name="Kimberley A.M."/>
            <person name="King A."/>
            <person name="Knights A.J."/>
            <person name="Lad H."/>
            <person name="Laird G."/>
            <person name="Lawlor S."/>
            <person name="Leongamornlert D.A."/>
            <person name="Lloyd D.M."/>
            <person name="Loveland J."/>
            <person name="Lovell J."/>
            <person name="Lush M.J."/>
            <person name="Lyne R."/>
            <person name="Martin S."/>
            <person name="Mashreghi-Mohammadi M."/>
            <person name="Matthews L."/>
            <person name="Matthews N.S.W."/>
            <person name="McLaren S."/>
            <person name="Milne S."/>
            <person name="Mistry S."/>
            <person name="Moore M.J.F."/>
            <person name="Nickerson T."/>
            <person name="O'Dell C.N."/>
            <person name="Oliver K."/>
            <person name="Palmeiri A."/>
            <person name="Palmer S.A."/>
            <person name="Parker A."/>
            <person name="Patel D."/>
            <person name="Pearce A.V."/>
            <person name="Peck A.I."/>
            <person name="Pelan S."/>
            <person name="Phelps K."/>
            <person name="Phillimore B.J."/>
            <person name="Plumb R."/>
            <person name="Rajan J."/>
            <person name="Raymond C."/>
            <person name="Rouse G."/>
            <person name="Saenphimmachak C."/>
            <person name="Sehra H.K."/>
            <person name="Sheridan E."/>
            <person name="Shownkeen R."/>
            <person name="Sims S."/>
            <person name="Skuce C.D."/>
            <person name="Smith M."/>
            <person name="Steward C."/>
            <person name="Subramanian S."/>
            <person name="Sycamore N."/>
            <person name="Tracey A."/>
            <person name="Tromans A."/>
            <person name="Van Helmond Z."/>
            <person name="Wall M."/>
            <person name="Wallis J.M."/>
            <person name="White S."/>
            <person name="Whitehead S.L."/>
            <person name="Wilkinson J.E."/>
            <person name="Willey D.L."/>
            <person name="Williams H."/>
            <person name="Wilming L."/>
            <person name="Wray P.W."/>
            <person name="Wu Z."/>
            <person name="Coulson A."/>
            <person name="Vaudin M."/>
            <person name="Sulston J.E."/>
            <person name="Durbin R.M."/>
            <person name="Hubbard T."/>
            <person name="Wooster R."/>
            <person name="Dunham I."/>
            <person name="Carter N.P."/>
            <person name="McVean G."/>
            <person name="Ross M.T."/>
            <person name="Harrow J."/>
            <person name="Olson M.V."/>
            <person name="Beck S."/>
            <person name="Rogers J."/>
            <person name="Bentley D.R."/>
        </authorList>
    </citation>
    <scope>NUCLEOTIDE SEQUENCE [LARGE SCALE GENOMIC DNA]</scope>
</reference>
<reference key="3">
    <citation type="submission" date="2005-09" db="EMBL/GenBank/DDBJ databases">
        <authorList>
            <person name="Mural R.J."/>
            <person name="Istrail S."/>
            <person name="Sutton G.G."/>
            <person name="Florea L."/>
            <person name="Halpern A.L."/>
            <person name="Mobarry C.M."/>
            <person name="Lippert R."/>
            <person name="Walenz B."/>
            <person name="Shatkay H."/>
            <person name="Dew I."/>
            <person name="Miller J.R."/>
            <person name="Flanigan M.J."/>
            <person name="Edwards N.J."/>
            <person name="Bolanos R."/>
            <person name="Fasulo D."/>
            <person name="Halldorsson B.V."/>
            <person name="Hannenhalli S."/>
            <person name="Turner R."/>
            <person name="Yooseph S."/>
            <person name="Lu F."/>
            <person name="Nusskern D.R."/>
            <person name="Shue B.C."/>
            <person name="Zheng X.H."/>
            <person name="Zhong F."/>
            <person name="Delcher A.L."/>
            <person name="Huson D.H."/>
            <person name="Kravitz S.A."/>
            <person name="Mouchard L."/>
            <person name="Reinert K."/>
            <person name="Remington K.A."/>
            <person name="Clark A.G."/>
            <person name="Waterman M.S."/>
            <person name="Eichler E.E."/>
            <person name="Adams M.D."/>
            <person name="Hunkapiller M.W."/>
            <person name="Myers E.W."/>
            <person name="Venter J.C."/>
        </authorList>
    </citation>
    <scope>NUCLEOTIDE SEQUENCE [LARGE SCALE GENOMIC DNA]</scope>
</reference>
<reference key="4">
    <citation type="journal article" date="2004" name="Genome Res.">
        <title>The status, quality, and expansion of the NIH full-length cDNA project: the Mammalian Gene Collection (MGC).</title>
        <authorList>
            <consortium name="The MGC Project Team"/>
        </authorList>
    </citation>
    <scope>NUCLEOTIDE SEQUENCE [LARGE SCALE MRNA]</scope>
</reference>
<reference key="5">
    <citation type="journal article" date="2010" name="N. Engl. J. Med.">
        <title>VANGL2 mutations in human cranial neural-tube defects.</title>
        <authorList>
            <person name="Lei Y.P."/>
            <person name="Zhang T."/>
            <person name="Li H."/>
            <person name="Wu B.L."/>
            <person name="Jin L."/>
            <person name="Wang H.Y."/>
        </authorList>
    </citation>
    <scope>VARIANTS NTD PHE-84; CYS-353 AND SER-437</scope>
    <scope>CHARACTERIZATION OF VARIANTS NTD CYS-353 AND SER-437</scope>
</reference>
<sequence length="521" mass="59714">MDTESQYSGYSYKSGHSRSSRKHRDRRDRHRSKSRDGGRGDKSVTIQAPGEPLLDNESTRGDERDDNWGETTTVVTGTSEHSISHDDLTRIAKDMEDSVPLDCSRHLGVAAGATLALLSFLTPLAFLLLPPLLWREELEPCGTACEGLFISVAFKLLILLLGSWALFFRRPKASLPRVFVLRALLMVLVFLLVVSYWLFYGVRILDARERSYQGVVQFAVSLVDALLFVHYLAVVLLELRQLQPQFTLKVVRSTDGASRFYNVGHLSIQRVAVWILEKYYHDFPVYNPALLNLPKSVLAKKVSGFKVYSLGEENSTNNSTGQSRAVIAAAARRRDNSHNEYYYEEAEHERRVRKRRARLVVAVEEAFTHIKRLQEEEQKNPREVMDPREAAQAIFASMARAMQKYLRTTKQQPYHTMESILQHLEFCITHDMTPKAFLERYLAAGPTIQYHKERWLAKQWTLVSEEPVTNGLKDGIVFLLKRQDFSLVVSTKKVPFFKLSEEFVDPKSHKFVMRLQSETSV</sequence>
<organism>
    <name type="scientific">Homo sapiens</name>
    <name type="common">Human</name>
    <dbReference type="NCBI Taxonomy" id="9606"/>
    <lineage>
        <taxon>Eukaryota</taxon>
        <taxon>Metazoa</taxon>
        <taxon>Chordata</taxon>
        <taxon>Craniata</taxon>
        <taxon>Vertebrata</taxon>
        <taxon>Euteleostomi</taxon>
        <taxon>Mammalia</taxon>
        <taxon>Eutheria</taxon>
        <taxon>Euarchontoglires</taxon>
        <taxon>Primates</taxon>
        <taxon>Haplorrhini</taxon>
        <taxon>Catarrhini</taxon>
        <taxon>Hominidae</taxon>
        <taxon>Homo</taxon>
    </lineage>
</organism>
<name>VANG2_HUMAN</name>
<protein>
    <recommendedName>
        <fullName>Vang-like protein 2</fullName>
    </recommendedName>
    <alternativeName>
        <fullName>Loop-tail protein 1 homolog</fullName>
    </alternativeName>
    <alternativeName>
        <fullName>Strabismus 1</fullName>
    </alternativeName>
    <alternativeName>
        <fullName>Van Gogh-like protein 2</fullName>
    </alternativeName>
</protein>